<gene>
    <name type="primary">mybI</name>
    <name type="ORF">DDB_G0289151</name>
</gene>
<name>MYBI_DICDI</name>
<keyword id="KW-0238">DNA-binding</keyword>
<keyword id="KW-0539">Nucleus</keyword>
<keyword id="KW-1185">Reference proteome</keyword>
<keyword id="KW-0804">Transcription</keyword>
<keyword id="KW-0805">Transcription regulation</keyword>
<sequence length="977" mass="110969">MMNNQSMVRYQDGSYDFGSSPSPPVYSPIYRSPPPPPQPMYGTLPQYPRFLDNSHHQVMDNSDHEQQQQHHHHQQQQQQQQHHHQQQQQQQHHQQQQQQHHQQQQQHHHQQQQQQQQQLDKSYAPSNIVSELQRKIQFLEEEISRKRDTIEGLQSQVAKYEQEKQSEKKKQSRYWTPEEHSRFIEALSKYGHKDVKSISQYVSTRNPTQVRTHAQKYFLRIDRERGRKLESKESINGGADKDDDWLREEYNDEGSPTQYSSCSNSPTTNSVANPFSNSLIISSNNNNNSNSSNNNNNNNNNNNNNNNNNNININGSSGSNSNVNSGNSSPLIKRKREAVTITATQAKSALLYKDAVLAILPTSWTPSDYEQFSKGLISNIDQDDIHSLCKLIKENFLPMQSMENIESAYHAFQKAVLKQKDINNNNNNNNNNNNINNNNNNNINNNNSNNNNNNNNTNNNNNNNNNNNNTNNNNNNNNNNNNNSSNINNNNMNNSINNNNINNNGPNSPNLLSSQPQQINQQIIQQQLLNNNNNQNSNQNNNNNNNNNNNNIINNNNNNNNNSSNNNSNNNNNINNNNNSNNNNNGNNNSNNNNNNNNNNNNNNNNINNNNNNNNGNNINNNNNNNNNSSNQIIQQQQQVQQQQMQQQQMMMQNQIIPTLPMPSPQSQVLQSQFQPQQQMQQQMQMQYQQQQQQQQQQQQQQQQQQQQQQQQQQQQQQQQQQQQQQQQQQQQIYQQNLNSNSGNSSPNISSINGDFVRSPNYNNKKRPPPVNVSRPEFPVTPLSGSPSHSPAQSPHYNLNNGNNNNGNGSSNSSSYSGNQSPLGLVPSPSLSLHPPSPLITSPTSHSIRWPGPLNNTLMYDYRRMEPSHGINYVPLQQSPHAPPQQSPHFNNNSNNNNNNSNNNSNNSNNNSSGSSGINISDLNNSSDENNNSSNNSSNGSGSWHQYQATDSPTGWGMNQTITAFSNTSLSINNSQS</sequence>
<accession>Q54HX6</accession>
<proteinExistence type="inferred from homology"/>
<reference key="1">
    <citation type="journal article" date="2005" name="Nature">
        <title>The genome of the social amoeba Dictyostelium discoideum.</title>
        <authorList>
            <person name="Eichinger L."/>
            <person name="Pachebat J.A."/>
            <person name="Gloeckner G."/>
            <person name="Rajandream M.A."/>
            <person name="Sucgang R."/>
            <person name="Berriman M."/>
            <person name="Song J."/>
            <person name="Olsen R."/>
            <person name="Szafranski K."/>
            <person name="Xu Q."/>
            <person name="Tunggal B."/>
            <person name="Kummerfeld S."/>
            <person name="Madera M."/>
            <person name="Konfortov B.A."/>
            <person name="Rivero F."/>
            <person name="Bankier A.T."/>
            <person name="Lehmann R."/>
            <person name="Hamlin N."/>
            <person name="Davies R."/>
            <person name="Gaudet P."/>
            <person name="Fey P."/>
            <person name="Pilcher K."/>
            <person name="Chen G."/>
            <person name="Saunders D."/>
            <person name="Sodergren E.J."/>
            <person name="Davis P."/>
            <person name="Kerhornou A."/>
            <person name="Nie X."/>
            <person name="Hall N."/>
            <person name="Anjard C."/>
            <person name="Hemphill L."/>
            <person name="Bason N."/>
            <person name="Farbrother P."/>
            <person name="Desany B."/>
            <person name="Just E."/>
            <person name="Morio T."/>
            <person name="Rost R."/>
            <person name="Churcher C.M."/>
            <person name="Cooper J."/>
            <person name="Haydock S."/>
            <person name="van Driessche N."/>
            <person name="Cronin A."/>
            <person name="Goodhead I."/>
            <person name="Muzny D.M."/>
            <person name="Mourier T."/>
            <person name="Pain A."/>
            <person name="Lu M."/>
            <person name="Harper D."/>
            <person name="Lindsay R."/>
            <person name="Hauser H."/>
            <person name="James K.D."/>
            <person name="Quiles M."/>
            <person name="Madan Babu M."/>
            <person name="Saito T."/>
            <person name="Buchrieser C."/>
            <person name="Wardroper A."/>
            <person name="Felder M."/>
            <person name="Thangavelu M."/>
            <person name="Johnson D."/>
            <person name="Knights A."/>
            <person name="Loulseged H."/>
            <person name="Mungall K.L."/>
            <person name="Oliver K."/>
            <person name="Price C."/>
            <person name="Quail M.A."/>
            <person name="Urushihara H."/>
            <person name="Hernandez J."/>
            <person name="Rabbinowitsch E."/>
            <person name="Steffen D."/>
            <person name="Sanders M."/>
            <person name="Ma J."/>
            <person name="Kohara Y."/>
            <person name="Sharp S."/>
            <person name="Simmonds M.N."/>
            <person name="Spiegler S."/>
            <person name="Tivey A."/>
            <person name="Sugano S."/>
            <person name="White B."/>
            <person name="Walker D."/>
            <person name="Woodward J.R."/>
            <person name="Winckler T."/>
            <person name="Tanaka Y."/>
            <person name="Shaulsky G."/>
            <person name="Schleicher M."/>
            <person name="Weinstock G.M."/>
            <person name="Rosenthal A."/>
            <person name="Cox E.C."/>
            <person name="Chisholm R.L."/>
            <person name="Gibbs R.A."/>
            <person name="Loomis W.F."/>
            <person name="Platzer M."/>
            <person name="Kay R.R."/>
            <person name="Williams J.G."/>
            <person name="Dear P.H."/>
            <person name="Noegel A.A."/>
            <person name="Barrell B.G."/>
            <person name="Kuspa A."/>
        </authorList>
    </citation>
    <scope>NUCLEOTIDE SEQUENCE [LARGE SCALE GENOMIC DNA]</scope>
    <source>
        <strain>AX4</strain>
    </source>
</reference>
<organism>
    <name type="scientific">Dictyostelium discoideum</name>
    <name type="common">Social amoeba</name>
    <dbReference type="NCBI Taxonomy" id="44689"/>
    <lineage>
        <taxon>Eukaryota</taxon>
        <taxon>Amoebozoa</taxon>
        <taxon>Evosea</taxon>
        <taxon>Eumycetozoa</taxon>
        <taxon>Dictyostelia</taxon>
        <taxon>Dictyosteliales</taxon>
        <taxon>Dictyosteliaceae</taxon>
        <taxon>Dictyostelium</taxon>
    </lineage>
</organism>
<evidence type="ECO:0000255" key="1">
    <source>
        <dbReference type="PROSITE-ProRule" id="PRU00625"/>
    </source>
</evidence>
<evidence type="ECO:0000256" key="2">
    <source>
        <dbReference type="SAM" id="MobiDB-lite"/>
    </source>
</evidence>
<feature type="chain" id="PRO_0000329384" description="Myb-like protein I">
    <location>
        <begin position="1"/>
        <end position="977"/>
    </location>
</feature>
<feature type="domain" description="HTH myb-type" evidence="1">
    <location>
        <begin position="167"/>
        <end position="222"/>
    </location>
</feature>
<feature type="DNA-binding region" description="H-T-H motif" evidence="1">
    <location>
        <begin position="195"/>
        <end position="218"/>
    </location>
</feature>
<feature type="region of interest" description="Disordered" evidence="2">
    <location>
        <begin position="1"/>
        <end position="122"/>
    </location>
</feature>
<feature type="region of interest" description="Disordered" evidence="2">
    <location>
        <begin position="229"/>
        <end position="331"/>
    </location>
</feature>
<feature type="region of interest" description="Disordered" evidence="2">
    <location>
        <begin position="422"/>
        <end position="516"/>
    </location>
</feature>
<feature type="region of interest" description="Disordered" evidence="2">
    <location>
        <begin position="531"/>
        <end position="650"/>
    </location>
</feature>
<feature type="region of interest" description="Disordered" evidence="2">
    <location>
        <begin position="738"/>
        <end position="853"/>
    </location>
</feature>
<feature type="region of interest" description="Disordered" evidence="2">
    <location>
        <begin position="872"/>
        <end position="960"/>
    </location>
</feature>
<feature type="compositionally biased region" description="Pro residues" evidence="2">
    <location>
        <begin position="21"/>
        <end position="39"/>
    </location>
</feature>
<feature type="compositionally biased region" description="Basic and acidic residues" evidence="2">
    <location>
        <begin position="52"/>
        <end position="68"/>
    </location>
</feature>
<feature type="compositionally biased region" description="Low complexity" evidence="2">
    <location>
        <begin position="75"/>
        <end position="118"/>
    </location>
</feature>
<feature type="compositionally biased region" description="Acidic residues" evidence="2">
    <location>
        <begin position="241"/>
        <end position="252"/>
    </location>
</feature>
<feature type="compositionally biased region" description="Polar residues" evidence="2">
    <location>
        <begin position="254"/>
        <end position="275"/>
    </location>
</feature>
<feature type="compositionally biased region" description="Low complexity" evidence="2">
    <location>
        <begin position="276"/>
        <end position="329"/>
    </location>
</feature>
<feature type="compositionally biased region" description="Low complexity" evidence="2">
    <location>
        <begin position="422"/>
        <end position="504"/>
    </location>
</feature>
<feature type="compositionally biased region" description="Polar residues" evidence="2">
    <location>
        <begin position="505"/>
        <end position="516"/>
    </location>
</feature>
<feature type="compositionally biased region" description="Low complexity" evidence="2">
    <location>
        <begin position="738"/>
        <end position="754"/>
    </location>
</feature>
<feature type="compositionally biased region" description="Polar residues" evidence="2">
    <location>
        <begin position="783"/>
        <end position="797"/>
    </location>
</feature>
<feature type="compositionally biased region" description="Low complexity" evidence="2">
    <location>
        <begin position="798"/>
        <end position="848"/>
    </location>
</feature>
<feature type="compositionally biased region" description="Low complexity" evidence="2">
    <location>
        <begin position="887"/>
        <end position="943"/>
    </location>
</feature>
<feature type="compositionally biased region" description="Polar residues" evidence="2">
    <location>
        <begin position="944"/>
        <end position="960"/>
    </location>
</feature>
<dbReference type="EMBL" id="AAFI02000130">
    <property type="protein sequence ID" value="EAL62883.1"/>
    <property type="molecule type" value="Genomic_DNA"/>
</dbReference>
<dbReference type="RefSeq" id="XP_636387.1">
    <property type="nucleotide sequence ID" value="XM_631295.1"/>
</dbReference>
<dbReference type="SMR" id="Q54HX6"/>
<dbReference type="FunCoup" id="Q54HX6">
    <property type="interactions" value="131"/>
</dbReference>
<dbReference type="STRING" id="44689.Q54HX6"/>
<dbReference type="PaxDb" id="44689-DDB0233332"/>
<dbReference type="EnsemblProtists" id="EAL62883">
    <property type="protein sequence ID" value="EAL62883"/>
    <property type="gene ID" value="DDB_G0289151"/>
</dbReference>
<dbReference type="GeneID" id="8626988"/>
<dbReference type="KEGG" id="ddi:DDB_G0289151"/>
<dbReference type="dictyBase" id="DDB_G0289151">
    <property type="gene designation" value="mybI"/>
</dbReference>
<dbReference type="VEuPathDB" id="AmoebaDB:DDB_G0289151"/>
<dbReference type="eggNOG" id="ENOG502RSSQ">
    <property type="taxonomic scope" value="Eukaryota"/>
</dbReference>
<dbReference type="HOGENOM" id="CLU_304287_0_0_1"/>
<dbReference type="InParanoid" id="Q54HX6"/>
<dbReference type="OMA" id="SAYHAFQ"/>
<dbReference type="PRO" id="PR:Q54HX6"/>
<dbReference type="Proteomes" id="UP000002195">
    <property type="component" value="Chromosome 5"/>
</dbReference>
<dbReference type="GO" id="GO:0005634">
    <property type="term" value="C:nucleus"/>
    <property type="evidence" value="ECO:0007669"/>
    <property type="project" value="UniProtKB-SubCell"/>
</dbReference>
<dbReference type="GO" id="GO:0003677">
    <property type="term" value="F:DNA binding"/>
    <property type="evidence" value="ECO:0000250"/>
    <property type="project" value="dictyBase"/>
</dbReference>
<dbReference type="CDD" id="cd00167">
    <property type="entry name" value="SANT"/>
    <property type="match status" value="1"/>
</dbReference>
<dbReference type="Gene3D" id="1.10.10.60">
    <property type="entry name" value="Homeodomain-like"/>
    <property type="match status" value="1"/>
</dbReference>
<dbReference type="InterPro" id="IPR009057">
    <property type="entry name" value="Homeodomain-like_sf"/>
</dbReference>
<dbReference type="InterPro" id="IPR017930">
    <property type="entry name" value="Myb_dom"/>
</dbReference>
<dbReference type="InterPro" id="IPR001005">
    <property type="entry name" value="SANT/Myb"/>
</dbReference>
<dbReference type="InterPro" id="IPR017884">
    <property type="entry name" value="SANT_dom"/>
</dbReference>
<dbReference type="PANTHER" id="PTHR44042">
    <property type="entry name" value="DUPLICATED HOMEODOMAIN-LIKE SUPERFAMILY PROTEIN-RELATED"/>
    <property type="match status" value="1"/>
</dbReference>
<dbReference type="PANTHER" id="PTHR44042:SF67">
    <property type="entry name" value="MYB-LIKE PROTEIN I"/>
    <property type="match status" value="1"/>
</dbReference>
<dbReference type="Pfam" id="PF00249">
    <property type="entry name" value="Myb_DNA-binding"/>
    <property type="match status" value="1"/>
</dbReference>
<dbReference type="SMART" id="SM00717">
    <property type="entry name" value="SANT"/>
    <property type="match status" value="1"/>
</dbReference>
<dbReference type="SUPFAM" id="SSF46689">
    <property type="entry name" value="Homeodomain-like"/>
    <property type="match status" value="1"/>
</dbReference>
<dbReference type="PROSITE" id="PS51294">
    <property type="entry name" value="HTH_MYB"/>
    <property type="match status" value="1"/>
</dbReference>
<comment type="subcellular location">
    <subcellularLocation>
        <location evidence="1">Nucleus</location>
    </subcellularLocation>
</comment>
<protein>
    <recommendedName>
        <fullName>Myb-like protein I</fullName>
    </recommendedName>
</protein>